<name>SYLM_YEAST</name>
<comment type="function">
    <text evidence="3">Catalyzes the attachment of leucine to tRNA(Leu) in the mitochondrion.</text>
</comment>
<comment type="catalytic activity">
    <reaction evidence="3">
        <text>tRNA(Leu) + L-leucine + ATP = L-leucyl-tRNA(Leu) + AMP + diphosphate</text>
        <dbReference type="Rhea" id="RHEA:11688"/>
        <dbReference type="Rhea" id="RHEA-COMP:9613"/>
        <dbReference type="Rhea" id="RHEA-COMP:9622"/>
        <dbReference type="ChEBI" id="CHEBI:30616"/>
        <dbReference type="ChEBI" id="CHEBI:33019"/>
        <dbReference type="ChEBI" id="CHEBI:57427"/>
        <dbReference type="ChEBI" id="CHEBI:78442"/>
        <dbReference type="ChEBI" id="CHEBI:78494"/>
        <dbReference type="ChEBI" id="CHEBI:456215"/>
        <dbReference type="EC" id="6.1.1.4"/>
    </reaction>
    <physiologicalReaction direction="left-to-right" evidence="3">
        <dbReference type="Rhea" id="RHEA:11689"/>
    </physiologicalReaction>
</comment>
<comment type="biophysicochemical properties">
    <kinetics>
        <KM evidence="3">7.1 uM for leucine</KM>
        <KM evidence="3">1.02 uM for tRNA</KM>
    </kinetics>
    <phDependence>
        <text evidence="3">Optimum pH is 8.0-9.5.</text>
    </phDependence>
    <temperatureDependence>
        <text evidence="3">Optimum temperature is 37 degrees Celsius.</text>
    </temperatureDependence>
</comment>
<comment type="subcellular location">
    <subcellularLocation>
        <location evidence="3">Mitochondrion matrix</location>
    </subcellularLocation>
</comment>
<comment type="miscellaneous">
    <text evidence="5">PubMed:3034607 authors identified this protein as the gene product of the NAM2 gene, which is capable of compensating for mutations in mRNA maturase encoded by the fourth intron of the mitochondrial cytochrome b gene.</text>
</comment>
<comment type="miscellaneous">
    <text evidence="2">Present with 2120 molecules/cell in log phase SD medium.</text>
</comment>
<comment type="similarity">
    <text evidence="4">Belongs to the class-I aminoacyl-tRNA synthetase family.</text>
</comment>
<organism>
    <name type="scientific">Saccharomyces cerevisiae (strain ATCC 204508 / S288c)</name>
    <name type="common">Baker's yeast</name>
    <dbReference type="NCBI Taxonomy" id="559292"/>
    <lineage>
        <taxon>Eukaryota</taxon>
        <taxon>Fungi</taxon>
        <taxon>Dikarya</taxon>
        <taxon>Ascomycota</taxon>
        <taxon>Saccharomycotina</taxon>
        <taxon>Saccharomycetes</taxon>
        <taxon>Saccharomycetales</taxon>
        <taxon>Saccharomycetaceae</taxon>
        <taxon>Saccharomyces</taxon>
    </lineage>
</organism>
<evidence type="ECO:0000250" key="1"/>
<evidence type="ECO:0000269" key="2">
    <source>
    </source>
</evidence>
<evidence type="ECO:0000269" key="3">
    <source>
    </source>
</evidence>
<evidence type="ECO:0000305" key="4"/>
<evidence type="ECO:0000305" key="5">
    <source>
    </source>
</evidence>
<gene>
    <name type="primary">NAM2</name>
    <name type="synonym">MSL1</name>
    <name type="ordered locus">YLR382C</name>
    <name type="ORF">L3502.6</name>
</gene>
<proteinExistence type="evidence at protein level"/>
<feature type="transit peptide" description="Mitochondrion" evidence="3">
    <location>
        <begin position="1"/>
        <end position="9"/>
    </location>
</feature>
<feature type="chain" id="PRO_0000035810" description="Leucine--tRNA ligase, mitochondrial">
    <location>
        <begin position="10"/>
        <end position="894"/>
    </location>
</feature>
<feature type="short sequence motif" description="'HIGH' region">
    <location>
        <begin position="56"/>
        <end position="66"/>
    </location>
</feature>
<feature type="short sequence motif" description="'KMSKS' region">
    <location>
        <begin position="646"/>
        <end position="650"/>
    </location>
</feature>
<feature type="binding site" evidence="1">
    <location>
        <position position="649"/>
    </location>
    <ligand>
        <name>ATP</name>
        <dbReference type="ChEBI" id="CHEBI:30616"/>
    </ligand>
</feature>
<dbReference type="EC" id="6.1.1.4" evidence="3"/>
<dbReference type="EMBL" id="J03495">
    <property type="protein sequence ID" value="AAA34805.1"/>
    <property type="molecule type" value="Genomic_DNA"/>
</dbReference>
<dbReference type="EMBL" id="X05143">
    <property type="protein sequence ID" value="CAA28791.1"/>
    <property type="molecule type" value="Genomic_DNA"/>
</dbReference>
<dbReference type="EMBL" id="U19104">
    <property type="protein sequence ID" value="AAB67277.1"/>
    <property type="molecule type" value="Genomic_DNA"/>
</dbReference>
<dbReference type="EMBL" id="BK006945">
    <property type="protein sequence ID" value="DAA09683.1"/>
    <property type="molecule type" value="Genomic_DNA"/>
</dbReference>
<dbReference type="PIR" id="A28521">
    <property type="entry name" value="SYBYLM"/>
</dbReference>
<dbReference type="RefSeq" id="NP_013486.3">
    <property type="nucleotide sequence ID" value="NM_001182271.3"/>
</dbReference>
<dbReference type="SMR" id="P11325"/>
<dbReference type="BioGRID" id="31641">
    <property type="interactions" value="85"/>
</dbReference>
<dbReference type="ComplexPortal" id="CPX-1314">
    <property type="entry name" value="bI4 intron splicing factor complex"/>
</dbReference>
<dbReference type="FunCoup" id="P11325">
    <property type="interactions" value="655"/>
</dbReference>
<dbReference type="IntAct" id="P11325">
    <property type="interactions" value="10"/>
</dbReference>
<dbReference type="MINT" id="P11325"/>
<dbReference type="STRING" id="4932.YLR382C"/>
<dbReference type="MoonProt" id="P11325"/>
<dbReference type="CarbonylDB" id="P11325"/>
<dbReference type="iPTMnet" id="P11325"/>
<dbReference type="PaxDb" id="4932-YLR382C"/>
<dbReference type="PeptideAtlas" id="P11325"/>
<dbReference type="EnsemblFungi" id="YLR382C_mRNA">
    <property type="protein sequence ID" value="YLR382C"/>
    <property type="gene ID" value="YLR382C"/>
</dbReference>
<dbReference type="GeneID" id="851098"/>
<dbReference type="KEGG" id="sce:YLR382C"/>
<dbReference type="AGR" id="SGD:S000004374"/>
<dbReference type="SGD" id="S000004374">
    <property type="gene designation" value="NAM2"/>
</dbReference>
<dbReference type="VEuPathDB" id="FungiDB:YLR382C"/>
<dbReference type="eggNOG" id="KOG0435">
    <property type="taxonomic scope" value="Eukaryota"/>
</dbReference>
<dbReference type="GeneTree" id="ENSGT00390000015114"/>
<dbReference type="HOGENOM" id="CLU_004427_2_0_1"/>
<dbReference type="InParanoid" id="P11325"/>
<dbReference type="OMA" id="DDVDWAD"/>
<dbReference type="OrthoDB" id="15954at2759"/>
<dbReference type="BioCyc" id="YEAST:G3O-32448-MONOMER"/>
<dbReference type="BioGRID-ORCS" id="851098">
    <property type="hits" value="4 hits in 10 CRISPR screens"/>
</dbReference>
<dbReference type="PRO" id="PR:P11325"/>
<dbReference type="Proteomes" id="UP000002311">
    <property type="component" value="Chromosome XII"/>
</dbReference>
<dbReference type="RNAct" id="P11325">
    <property type="molecule type" value="protein"/>
</dbReference>
<dbReference type="GO" id="GO:0005759">
    <property type="term" value="C:mitochondrial matrix"/>
    <property type="evidence" value="ECO:0007669"/>
    <property type="project" value="UniProtKB-SubCell"/>
</dbReference>
<dbReference type="GO" id="GO:0005739">
    <property type="term" value="C:mitochondrion"/>
    <property type="evidence" value="ECO:0000314"/>
    <property type="project" value="SGD"/>
</dbReference>
<dbReference type="GO" id="GO:0002161">
    <property type="term" value="F:aminoacyl-tRNA deacylase activity"/>
    <property type="evidence" value="ECO:0007669"/>
    <property type="project" value="InterPro"/>
</dbReference>
<dbReference type="GO" id="GO:0005524">
    <property type="term" value="F:ATP binding"/>
    <property type="evidence" value="ECO:0007669"/>
    <property type="project" value="UniProtKB-KW"/>
</dbReference>
<dbReference type="GO" id="GO:0004823">
    <property type="term" value="F:leucine-tRNA ligase activity"/>
    <property type="evidence" value="ECO:0000314"/>
    <property type="project" value="SGD"/>
</dbReference>
<dbReference type="GO" id="GO:0097157">
    <property type="term" value="F:pre-mRNA intronic binding"/>
    <property type="evidence" value="ECO:0000353"/>
    <property type="project" value="SGD"/>
</dbReference>
<dbReference type="GO" id="GO:0000372">
    <property type="term" value="P:Group I intron splicing"/>
    <property type="evidence" value="ECO:0000314"/>
    <property type="project" value="ComplexPortal"/>
</dbReference>
<dbReference type="GO" id="GO:0006429">
    <property type="term" value="P:leucyl-tRNA aminoacylation"/>
    <property type="evidence" value="ECO:0000314"/>
    <property type="project" value="SGD"/>
</dbReference>
<dbReference type="GO" id="GO:0032543">
    <property type="term" value="P:mitochondrial translation"/>
    <property type="evidence" value="ECO:0000316"/>
    <property type="project" value="SGD"/>
</dbReference>
<dbReference type="GO" id="GO:0006397">
    <property type="term" value="P:mRNA processing"/>
    <property type="evidence" value="ECO:0000314"/>
    <property type="project" value="ComplexPortal"/>
</dbReference>
<dbReference type="CDD" id="cd00812">
    <property type="entry name" value="LeuRS_core"/>
    <property type="match status" value="1"/>
</dbReference>
<dbReference type="FunFam" id="3.40.50.620:FF:000003">
    <property type="entry name" value="Leucine--tRNA ligase"/>
    <property type="match status" value="1"/>
</dbReference>
<dbReference type="FunFam" id="1.10.730.10:FF:000065">
    <property type="entry name" value="Leucyl-tRNA synthetase"/>
    <property type="match status" value="1"/>
</dbReference>
<dbReference type="FunFam" id="3.40.50.620:FF:000100">
    <property type="entry name" value="probable leucine--tRNA ligase, mitochondrial"/>
    <property type="match status" value="1"/>
</dbReference>
<dbReference type="Gene3D" id="3.40.50.620">
    <property type="entry name" value="HUPs"/>
    <property type="match status" value="2"/>
</dbReference>
<dbReference type="Gene3D" id="1.10.730.10">
    <property type="entry name" value="Isoleucyl-tRNA Synthetase, Domain 1"/>
    <property type="match status" value="1"/>
</dbReference>
<dbReference type="InterPro" id="IPR001412">
    <property type="entry name" value="aa-tRNA-synth_I_CS"/>
</dbReference>
<dbReference type="InterPro" id="IPR002300">
    <property type="entry name" value="aa-tRNA-synth_Ia"/>
</dbReference>
<dbReference type="InterPro" id="IPR002302">
    <property type="entry name" value="Leu-tRNA-ligase"/>
</dbReference>
<dbReference type="InterPro" id="IPR025709">
    <property type="entry name" value="Leu_tRNA-synth_edit"/>
</dbReference>
<dbReference type="InterPro" id="IPR014729">
    <property type="entry name" value="Rossmann-like_a/b/a_fold"/>
</dbReference>
<dbReference type="InterPro" id="IPR009080">
    <property type="entry name" value="tRNAsynth_Ia_anticodon-bd"/>
</dbReference>
<dbReference type="InterPro" id="IPR009008">
    <property type="entry name" value="Val/Leu/Ile-tRNA-synth_edit"/>
</dbReference>
<dbReference type="NCBIfam" id="TIGR00396">
    <property type="entry name" value="leuS_bact"/>
    <property type="match status" value="1"/>
</dbReference>
<dbReference type="PANTHER" id="PTHR43740:SF2">
    <property type="entry name" value="LEUCINE--TRNA LIGASE, MITOCHONDRIAL"/>
    <property type="match status" value="1"/>
</dbReference>
<dbReference type="PANTHER" id="PTHR43740">
    <property type="entry name" value="LEUCYL-TRNA SYNTHETASE"/>
    <property type="match status" value="1"/>
</dbReference>
<dbReference type="Pfam" id="PF00133">
    <property type="entry name" value="tRNA-synt_1"/>
    <property type="match status" value="1"/>
</dbReference>
<dbReference type="Pfam" id="PF13603">
    <property type="entry name" value="tRNA-synt_1_2"/>
    <property type="match status" value="1"/>
</dbReference>
<dbReference type="PRINTS" id="PR00985">
    <property type="entry name" value="TRNASYNTHLEU"/>
</dbReference>
<dbReference type="SUPFAM" id="SSF47323">
    <property type="entry name" value="Anticodon-binding domain of a subclass of class I aminoacyl-tRNA synthetases"/>
    <property type="match status" value="1"/>
</dbReference>
<dbReference type="SUPFAM" id="SSF52374">
    <property type="entry name" value="Nucleotidylyl transferase"/>
    <property type="match status" value="1"/>
</dbReference>
<dbReference type="SUPFAM" id="SSF50677">
    <property type="entry name" value="ValRS/IleRS/LeuRS editing domain"/>
    <property type="match status" value="1"/>
</dbReference>
<dbReference type="PROSITE" id="PS00178">
    <property type="entry name" value="AA_TRNA_LIGASE_I"/>
    <property type="match status" value="1"/>
</dbReference>
<reference key="1">
    <citation type="journal article" date="1988" name="J. Biol. Chem.">
        <title>Homology of yeast mitochondrial leucyl-tRNA synthetase and isoleucyl- and methionyl-tRNA synthetases of Escherichia coli.</title>
        <authorList>
            <person name="Tzagoloff A."/>
            <person name="Akai A."/>
            <person name="Kurkulos M."/>
            <person name="Repetto B."/>
        </authorList>
    </citation>
    <scope>NUCLEOTIDE SEQUENCE [GENOMIC DNA]</scope>
</reference>
<reference key="2">
    <citation type="journal article" date="1987" name="EMBO J.">
        <title>Three suppressor mutations which cure a mitochondrial RNA maturase deficiency occur at the same codon in the open reading frame of the nuclear NAM2 gene.</title>
        <authorList>
            <person name="Labouesse M."/>
            <person name="Herbert C.J."/>
            <person name="Dujardin G."/>
            <person name="Slonimski P.P."/>
        </authorList>
    </citation>
    <scope>NUCLEOTIDE SEQUENCE [GENOMIC DNA]</scope>
    <source>
        <strain>AB1-4A/8/55</strain>
    </source>
</reference>
<reference key="3">
    <citation type="journal article" date="1997" name="Nature">
        <title>The nucleotide sequence of Saccharomyces cerevisiae chromosome XII.</title>
        <authorList>
            <person name="Johnston M."/>
            <person name="Hillier L.W."/>
            <person name="Riles L."/>
            <person name="Albermann K."/>
            <person name="Andre B."/>
            <person name="Ansorge W."/>
            <person name="Benes V."/>
            <person name="Brueckner M."/>
            <person name="Delius H."/>
            <person name="Dubois E."/>
            <person name="Duesterhoeft A."/>
            <person name="Entian K.-D."/>
            <person name="Floeth M."/>
            <person name="Goffeau A."/>
            <person name="Hebling U."/>
            <person name="Heumann K."/>
            <person name="Heuss-Neitzel D."/>
            <person name="Hilbert H."/>
            <person name="Hilger F."/>
            <person name="Kleine K."/>
            <person name="Koetter P."/>
            <person name="Louis E.J."/>
            <person name="Messenguy F."/>
            <person name="Mewes H.-W."/>
            <person name="Miosga T."/>
            <person name="Moestl D."/>
            <person name="Mueller-Auer S."/>
            <person name="Nentwich U."/>
            <person name="Obermaier B."/>
            <person name="Piravandi E."/>
            <person name="Pohl T.M."/>
            <person name="Portetelle D."/>
            <person name="Purnelle B."/>
            <person name="Rechmann S."/>
            <person name="Rieger M."/>
            <person name="Rinke M."/>
            <person name="Rose M."/>
            <person name="Scharfe M."/>
            <person name="Scherens B."/>
            <person name="Scholler P."/>
            <person name="Schwager C."/>
            <person name="Schwarz S."/>
            <person name="Underwood A.P."/>
            <person name="Urrestarazu L.A."/>
            <person name="Vandenbol M."/>
            <person name="Verhasselt P."/>
            <person name="Vierendeels F."/>
            <person name="Voet M."/>
            <person name="Volckaert G."/>
            <person name="Voss H."/>
            <person name="Wambutt R."/>
            <person name="Wedler E."/>
            <person name="Wedler H."/>
            <person name="Zimmermann F.K."/>
            <person name="Zollner A."/>
            <person name="Hani J."/>
            <person name="Hoheisel J.D."/>
        </authorList>
    </citation>
    <scope>NUCLEOTIDE SEQUENCE [LARGE SCALE GENOMIC DNA]</scope>
    <source>
        <strain>ATCC 204508 / S288c</strain>
    </source>
</reference>
<reference key="4">
    <citation type="journal article" date="2014" name="G3 (Bethesda)">
        <title>The reference genome sequence of Saccharomyces cerevisiae: Then and now.</title>
        <authorList>
            <person name="Engel S.R."/>
            <person name="Dietrich F.S."/>
            <person name="Fisk D.G."/>
            <person name="Binkley G."/>
            <person name="Balakrishnan R."/>
            <person name="Costanzo M.C."/>
            <person name="Dwight S.S."/>
            <person name="Hitz B.C."/>
            <person name="Karra K."/>
            <person name="Nash R.S."/>
            <person name="Weng S."/>
            <person name="Wong E.D."/>
            <person name="Lloyd P."/>
            <person name="Skrzypek M.S."/>
            <person name="Miyasato S.R."/>
            <person name="Simison M."/>
            <person name="Cherry J.M."/>
        </authorList>
    </citation>
    <scope>GENOME REANNOTATION</scope>
    <source>
        <strain>ATCC 204508 / S288c</strain>
    </source>
</reference>
<reference key="5">
    <citation type="journal article" date="1991" name="J. Biol. Chem.">
        <title>Purification and characterization of the Saccharomyces cerevisiae mitochondrial leucyl-tRNA synthetase.</title>
        <authorList>
            <person name="Zagorski W."/>
            <person name="Castaing B."/>
            <person name="Herbert C.J."/>
            <person name="Labouesse M."/>
            <person name="Martin R."/>
            <person name="Slonimski P.P."/>
        </authorList>
    </citation>
    <scope>PROTEIN SEQUENCE OF 10-31</scope>
    <scope>FUNCTION</scope>
    <scope>CATALYTIC ACTIVITY</scope>
    <scope>BIOPHYSICOCHEMICAL PROPERTIES</scope>
    <scope>SUBCELLULAR LOCATION</scope>
</reference>
<reference key="6">
    <citation type="journal article" date="2003" name="Nature">
        <title>Global analysis of protein expression in yeast.</title>
        <authorList>
            <person name="Ghaemmaghami S."/>
            <person name="Huh W.-K."/>
            <person name="Bower K."/>
            <person name="Howson R.W."/>
            <person name="Belle A."/>
            <person name="Dephoure N."/>
            <person name="O'Shea E.K."/>
            <person name="Weissman J.S."/>
        </authorList>
    </citation>
    <scope>LEVEL OF PROTEIN EXPRESSION [LARGE SCALE ANALYSIS]</scope>
</reference>
<protein>
    <recommendedName>
        <fullName>Leucine--tRNA ligase, mitochondrial</fullName>
        <ecNumber evidence="3">6.1.1.4</ecNumber>
    </recommendedName>
    <alternativeName>
        <fullName>Leucyl-tRNA synthetase</fullName>
        <shortName>LeuRS</shortName>
    </alternativeName>
</protein>
<sequence length="894" mass="101920">MLSRPSSRFLSTKRGPGPAVKKLIAIGEKWKQKTTRGLPKQDTLNSGSKYILCQFPYPSGALHIGHLRVYVISDSLNRFYKQKGYNVIHPMGWDAFGLPAENAAIERSINPAIWTRDNIAKMKQQMQSMLANFDWDREITTCDPEYYKFTQWIFLKLFENGLAYRKEAEINWDPVDMTVLANEQVDAQGRSWRSGAIVEKKQLKQWFLGITKFAPKLKKHLNQLKDWPSNVKQMQKNWIGESVGAELVFKVADPKFENLIVFTTRPETLFAVQYVALALDHPIVQKYCEEMPDLKEFIQKSDQLPNDTKEGFQLPNIKAVNPLTKEEVPIFAAPYVVSSYGSAPSAVMGCPGHDNRDFEFWQTNCPGEHIKTCIAPFFDDASKVTEQERQRIIDTVPFTSTDGVLTKECGEHSGVLTVVARKSIMGMLNSEGLSKSVVRYKIRDWLISRQRYWGTPIPIIHCDNCGPVPVPESDLPVKLPELEGLDTKGNPLSTIDEFVNVACPSCGSPAKRETDTMDTFIDSSWYYFRFLDPKNTSKPFDREIASKNMPVDIYIGGVEHAILHLLYSRFIAKFLGSINAWSDPAGIFEPFKKLVTQGMVQGKTYVDPDSGKFLKPDELTFVNDSPDGNTVIIKSNGKVPVVSYEKMSKSKYNGADPNECILRHGPDATRAHILFQSPIADALNWDESKIVGIERWLQKVLHLTKNILSLEKDLAISKDYKTPTDLNDAEVKFHNDFQRFLKSITESFEVNLSLNTVISDYMKLTNILESALKKGEVRNEMIVQNLQKLVTVIYPAVPSISEEAAEMINSQMEWNQYRWPEVERTTESKFKKFQIVVNGRVKFMYTADKNFLKLGRDAVIETLMNLPEGRMYLMNKKIKKFVMKFNVISFLFHK</sequence>
<keyword id="KW-0030">Aminoacyl-tRNA synthetase</keyword>
<keyword id="KW-0067">ATP-binding</keyword>
<keyword id="KW-0903">Direct protein sequencing</keyword>
<keyword id="KW-0436">Ligase</keyword>
<keyword id="KW-0496">Mitochondrion</keyword>
<keyword id="KW-0547">Nucleotide-binding</keyword>
<keyword id="KW-0648">Protein biosynthesis</keyword>
<keyword id="KW-1185">Reference proteome</keyword>
<keyword id="KW-0809">Transit peptide</keyword>
<accession>P11325</accession>
<accession>D6VZ17</accession>